<keyword id="KW-0963">Cytoplasm</keyword>
<keyword id="KW-0324">Glycolysis</keyword>
<keyword id="KW-0456">Lyase</keyword>
<keyword id="KW-0460">Magnesium</keyword>
<keyword id="KW-0479">Metal-binding</keyword>
<keyword id="KW-0964">Secreted</keyword>
<comment type="function">
    <text evidence="1">Catalyzes the reversible conversion of 2-phosphoglycerate (2-PG) into phosphoenolpyruvate (PEP). It is essential for the degradation of carbohydrates via glycolysis.</text>
</comment>
<comment type="catalytic activity">
    <reaction evidence="1">
        <text>(2R)-2-phosphoglycerate = phosphoenolpyruvate + H2O</text>
        <dbReference type="Rhea" id="RHEA:10164"/>
        <dbReference type="ChEBI" id="CHEBI:15377"/>
        <dbReference type="ChEBI" id="CHEBI:58289"/>
        <dbReference type="ChEBI" id="CHEBI:58702"/>
        <dbReference type="EC" id="4.2.1.11"/>
    </reaction>
</comment>
<comment type="cofactor">
    <cofactor evidence="1">
        <name>Mg(2+)</name>
        <dbReference type="ChEBI" id="CHEBI:18420"/>
    </cofactor>
    <text evidence="1">Binds a second Mg(2+) ion via substrate during catalysis.</text>
</comment>
<comment type="pathway">
    <text evidence="1">Carbohydrate degradation; glycolysis; pyruvate from D-glyceraldehyde 3-phosphate: step 4/5.</text>
</comment>
<comment type="subcellular location">
    <subcellularLocation>
        <location evidence="1">Cytoplasm</location>
    </subcellularLocation>
    <subcellularLocation>
        <location evidence="1">Secreted</location>
    </subcellularLocation>
    <subcellularLocation>
        <location evidence="1">Cell surface</location>
    </subcellularLocation>
    <text evidence="1">Fractions of enolase are present in both the cytoplasm and on the cell surface.</text>
</comment>
<comment type="similarity">
    <text evidence="1">Belongs to the enolase family.</text>
</comment>
<dbReference type="EC" id="4.2.1.11" evidence="1"/>
<dbReference type="EMBL" id="CP000717">
    <property type="protein sequence ID" value="ABR05384.1"/>
    <property type="molecule type" value="Genomic_DNA"/>
</dbReference>
<dbReference type="RefSeq" id="WP_003898693.1">
    <property type="nucleotide sequence ID" value="NZ_KK339377.1"/>
</dbReference>
<dbReference type="SMR" id="A1QQ97"/>
<dbReference type="KEGG" id="mtf:TBFG_11041"/>
<dbReference type="PATRIC" id="fig|336982.11.peg.1138"/>
<dbReference type="HOGENOM" id="CLU_031223_0_1_11"/>
<dbReference type="UniPathway" id="UPA00109">
    <property type="reaction ID" value="UER00187"/>
</dbReference>
<dbReference type="GO" id="GO:0009986">
    <property type="term" value="C:cell surface"/>
    <property type="evidence" value="ECO:0007669"/>
    <property type="project" value="UniProtKB-SubCell"/>
</dbReference>
<dbReference type="GO" id="GO:0005576">
    <property type="term" value="C:extracellular region"/>
    <property type="evidence" value="ECO:0007669"/>
    <property type="project" value="UniProtKB-SubCell"/>
</dbReference>
<dbReference type="GO" id="GO:0000015">
    <property type="term" value="C:phosphopyruvate hydratase complex"/>
    <property type="evidence" value="ECO:0007669"/>
    <property type="project" value="InterPro"/>
</dbReference>
<dbReference type="GO" id="GO:0000287">
    <property type="term" value="F:magnesium ion binding"/>
    <property type="evidence" value="ECO:0007669"/>
    <property type="project" value="UniProtKB-UniRule"/>
</dbReference>
<dbReference type="GO" id="GO:0004634">
    <property type="term" value="F:phosphopyruvate hydratase activity"/>
    <property type="evidence" value="ECO:0007669"/>
    <property type="project" value="UniProtKB-UniRule"/>
</dbReference>
<dbReference type="GO" id="GO:0006096">
    <property type="term" value="P:glycolytic process"/>
    <property type="evidence" value="ECO:0007669"/>
    <property type="project" value="UniProtKB-UniRule"/>
</dbReference>
<dbReference type="CDD" id="cd03313">
    <property type="entry name" value="enolase"/>
    <property type="match status" value="1"/>
</dbReference>
<dbReference type="FunFam" id="3.20.20.120:FF:000001">
    <property type="entry name" value="Enolase"/>
    <property type="match status" value="1"/>
</dbReference>
<dbReference type="FunFam" id="3.30.390.10:FF:000001">
    <property type="entry name" value="Enolase"/>
    <property type="match status" value="1"/>
</dbReference>
<dbReference type="Gene3D" id="3.20.20.120">
    <property type="entry name" value="Enolase-like C-terminal domain"/>
    <property type="match status" value="1"/>
</dbReference>
<dbReference type="Gene3D" id="3.30.390.10">
    <property type="entry name" value="Enolase-like, N-terminal domain"/>
    <property type="match status" value="1"/>
</dbReference>
<dbReference type="HAMAP" id="MF_00318">
    <property type="entry name" value="Enolase"/>
    <property type="match status" value="1"/>
</dbReference>
<dbReference type="InterPro" id="IPR000941">
    <property type="entry name" value="Enolase"/>
</dbReference>
<dbReference type="InterPro" id="IPR036849">
    <property type="entry name" value="Enolase-like_C_sf"/>
</dbReference>
<dbReference type="InterPro" id="IPR029017">
    <property type="entry name" value="Enolase-like_N"/>
</dbReference>
<dbReference type="InterPro" id="IPR020810">
    <property type="entry name" value="Enolase_C"/>
</dbReference>
<dbReference type="InterPro" id="IPR020809">
    <property type="entry name" value="Enolase_CS"/>
</dbReference>
<dbReference type="InterPro" id="IPR020811">
    <property type="entry name" value="Enolase_N"/>
</dbReference>
<dbReference type="NCBIfam" id="TIGR01060">
    <property type="entry name" value="eno"/>
    <property type="match status" value="1"/>
</dbReference>
<dbReference type="PANTHER" id="PTHR11902">
    <property type="entry name" value="ENOLASE"/>
    <property type="match status" value="1"/>
</dbReference>
<dbReference type="PANTHER" id="PTHR11902:SF1">
    <property type="entry name" value="ENOLASE"/>
    <property type="match status" value="1"/>
</dbReference>
<dbReference type="Pfam" id="PF00113">
    <property type="entry name" value="Enolase_C"/>
    <property type="match status" value="1"/>
</dbReference>
<dbReference type="Pfam" id="PF03952">
    <property type="entry name" value="Enolase_N"/>
    <property type="match status" value="1"/>
</dbReference>
<dbReference type="PIRSF" id="PIRSF001400">
    <property type="entry name" value="Enolase"/>
    <property type="match status" value="1"/>
</dbReference>
<dbReference type="PRINTS" id="PR00148">
    <property type="entry name" value="ENOLASE"/>
</dbReference>
<dbReference type="SFLD" id="SFLDS00001">
    <property type="entry name" value="Enolase"/>
    <property type="match status" value="1"/>
</dbReference>
<dbReference type="SFLD" id="SFLDF00002">
    <property type="entry name" value="enolase"/>
    <property type="match status" value="1"/>
</dbReference>
<dbReference type="SMART" id="SM01192">
    <property type="entry name" value="Enolase_C"/>
    <property type="match status" value="1"/>
</dbReference>
<dbReference type="SMART" id="SM01193">
    <property type="entry name" value="Enolase_N"/>
    <property type="match status" value="1"/>
</dbReference>
<dbReference type="SUPFAM" id="SSF51604">
    <property type="entry name" value="Enolase C-terminal domain-like"/>
    <property type="match status" value="1"/>
</dbReference>
<dbReference type="SUPFAM" id="SSF54826">
    <property type="entry name" value="Enolase N-terminal domain-like"/>
    <property type="match status" value="1"/>
</dbReference>
<dbReference type="PROSITE" id="PS00164">
    <property type="entry name" value="ENOLASE"/>
    <property type="match status" value="1"/>
</dbReference>
<reference key="1">
    <citation type="submission" date="2007-04" db="EMBL/GenBank/DDBJ databases">
        <title>The complete genome sequence of Mycobacterium tuberculosis F11.</title>
        <authorList>
            <person name="Birren B."/>
            <person name="Lander E."/>
            <person name="Galagan J."/>
            <person name="Devon K."/>
            <person name="Nusbaum C."/>
            <person name="Borowsky M.L."/>
            <person name="Grabherr M."/>
            <person name="Mauceli E."/>
            <person name="Brockman W."/>
            <person name="Young S."/>
            <person name="LaButti K."/>
            <person name="Pushparaj V."/>
            <person name="Sykes S."/>
            <person name="Baldwin J."/>
            <person name="Fitzgerald M."/>
            <person name="Bloom T."/>
            <person name="Zimmer A."/>
            <person name="Settipalli S."/>
            <person name="Shea T."/>
            <person name="Arachchi H."/>
            <person name="Macdonald P."/>
            <person name="Abouelleil A."/>
            <person name="Lui A."/>
            <person name="Priest M."/>
            <person name="Berlin A."/>
            <person name="Gearin G."/>
            <person name="Brown A."/>
            <person name="Aftuck L."/>
            <person name="Bessette D."/>
            <person name="Allen N."/>
            <person name="Lubonja R."/>
            <person name="Lokyitsang T."/>
            <person name="Matthews C."/>
            <person name="Dunbar C."/>
            <person name="Benamara M."/>
            <person name="Nguyen T."/>
            <person name="Negash T."/>
            <person name="DeCaprio D."/>
            <person name="Crawford M."/>
            <person name="Koehrsen M."/>
            <person name="Engels R."/>
            <person name="Montgomery P."/>
            <person name="Pearson M."/>
            <person name="Howarth C."/>
            <person name="Kodira C."/>
            <person name="Zeng Q."/>
            <person name="Yandava C."/>
            <person name="O'Leary S."/>
            <person name="Alvarado L."/>
            <person name="Victor T."/>
            <person name="Murray M."/>
        </authorList>
    </citation>
    <scope>NUCLEOTIDE SEQUENCE [LARGE SCALE GENOMIC DNA]</scope>
    <source>
        <strain>F11</strain>
    </source>
</reference>
<evidence type="ECO:0000255" key="1">
    <source>
        <dbReference type="HAMAP-Rule" id="MF_00318"/>
    </source>
</evidence>
<protein>
    <recommendedName>
        <fullName evidence="1">Enolase</fullName>
        <ecNumber evidence="1">4.2.1.11</ecNumber>
    </recommendedName>
    <alternativeName>
        <fullName evidence="1">2-phospho-D-glycerate hydro-lyase</fullName>
    </alternativeName>
    <alternativeName>
        <fullName evidence="1">2-phosphoglycerate dehydratase</fullName>
    </alternativeName>
</protein>
<accession>A1QQ97</accession>
<accession>A5WL45</accession>
<name>ENO_MYCTF</name>
<feature type="chain" id="PRO_0000280865" description="Enolase">
    <location>
        <begin position="1"/>
        <end position="429"/>
    </location>
</feature>
<feature type="active site" description="Proton donor" evidence="1">
    <location>
        <position position="204"/>
    </location>
</feature>
<feature type="active site" description="Proton acceptor" evidence="1">
    <location>
        <position position="335"/>
    </location>
</feature>
<feature type="binding site" evidence="1">
    <location>
        <position position="162"/>
    </location>
    <ligand>
        <name>(2R)-2-phosphoglycerate</name>
        <dbReference type="ChEBI" id="CHEBI:58289"/>
    </ligand>
</feature>
<feature type="binding site" evidence="1">
    <location>
        <position position="241"/>
    </location>
    <ligand>
        <name>Mg(2+)</name>
        <dbReference type="ChEBI" id="CHEBI:18420"/>
    </ligand>
</feature>
<feature type="binding site" evidence="1">
    <location>
        <position position="283"/>
    </location>
    <ligand>
        <name>Mg(2+)</name>
        <dbReference type="ChEBI" id="CHEBI:18420"/>
    </ligand>
</feature>
<feature type="binding site" evidence="1">
    <location>
        <position position="310"/>
    </location>
    <ligand>
        <name>Mg(2+)</name>
        <dbReference type="ChEBI" id="CHEBI:18420"/>
    </ligand>
</feature>
<feature type="binding site" evidence="1">
    <location>
        <position position="335"/>
    </location>
    <ligand>
        <name>(2R)-2-phosphoglycerate</name>
        <dbReference type="ChEBI" id="CHEBI:58289"/>
    </ligand>
</feature>
<feature type="binding site" evidence="1">
    <location>
        <position position="364"/>
    </location>
    <ligand>
        <name>(2R)-2-phosphoglycerate</name>
        <dbReference type="ChEBI" id="CHEBI:58289"/>
    </ligand>
</feature>
<feature type="binding site" evidence="1">
    <location>
        <position position="365"/>
    </location>
    <ligand>
        <name>(2R)-2-phosphoglycerate</name>
        <dbReference type="ChEBI" id="CHEBI:58289"/>
    </ligand>
</feature>
<feature type="binding site" evidence="1">
    <location>
        <position position="386"/>
    </location>
    <ligand>
        <name>(2R)-2-phosphoglycerate</name>
        <dbReference type="ChEBI" id="CHEBI:58289"/>
    </ligand>
</feature>
<gene>
    <name evidence="1" type="primary">eno</name>
    <name type="ordered locus">TBFG_11041</name>
</gene>
<proteinExistence type="inferred from homology"/>
<organism>
    <name type="scientific">Mycobacterium tuberculosis (strain F11)</name>
    <dbReference type="NCBI Taxonomy" id="336982"/>
    <lineage>
        <taxon>Bacteria</taxon>
        <taxon>Bacillati</taxon>
        <taxon>Actinomycetota</taxon>
        <taxon>Actinomycetes</taxon>
        <taxon>Mycobacteriales</taxon>
        <taxon>Mycobacteriaceae</taxon>
        <taxon>Mycobacterium</taxon>
        <taxon>Mycobacterium tuberculosis complex</taxon>
    </lineage>
</organism>
<sequence>MPIIEQVRAREILDSRGNPTVEVEVALIDGTFARAAVPSGASTGEHEAVELRDGGDRYGGKGVQKAVQAVLDEIGPAVIGLNADDQRLVDQALVDLDGTPDKSRLGGNAILGVSLAVAKAAADSAELPLFRYVGGPNAHILPVPMMNILNGGAHADTAVDIQEFMVAPIGAPSFVEALRWGAEVYHALKSVLKKEGLSTGLGDEGGFAPDVAGTTAALDLISRAIESAGLRPGADVALALDAAATEFFTDGTGYVFEGTTRTADQMTEFYAGLLGAYPLVSIEDPLSEDDWDGWAALTASIGDRVQIVGDDIFVTNPERLEEGIERGVANALLVKVNQIGTLTETLDAVTLAHHGGYRTMISHRSGETEDTMIADLAVAIGSGQIKTGAPARSERVAKYNQLLRIEEALGDAARYAGDLAFPRFACETK</sequence>